<sequence>MITREFDTIAAISTPLGEGAIGIVRLSGTDSFAIAQKIFKGKDLSKVASHTLNYGHIVDPQNQEVLDEVMIGAMRSPKTFTREDIIEINTHGGIAVTNEILQLAIREGARMAEPGEFTKRAFLNGRVDLTQAEAVMDIIRAKTDKAMNNAVKQLDGSLSNLINNTRQEILNTLAQVEVNIDYPEYDDVEEMTTQLMREKTAEFEELLTSLLNTARRGKILREGISTAIIGRPNVGKSSLLNNLLREDKAIVTDIAGTTRDVIEEYVNIKGVPLKLIDTAGIRETDDLVEQIGVERSKKALQEADLVLLVLNASEPLTDQDKQLLEISQDSNRIVLLNKTDLEEKIELDQLPTDIIKISVLHNQNIDKIEERINQLFFENAGIVEQDATYLSNARHISLIEKALESLQAVNQGLEMGMPVDLLQVDMTRTWEILGEITGDAAPDELITQLFSQFCLGK</sequence>
<feature type="chain" id="PRO_1000080020" description="tRNA modification GTPase MnmE">
    <location>
        <begin position="1"/>
        <end position="457"/>
    </location>
</feature>
<feature type="domain" description="TrmE-type G">
    <location>
        <begin position="223"/>
        <end position="377"/>
    </location>
</feature>
<feature type="binding site" evidence="1">
    <location>
        <position position="25"/>
    </location>
    <ligand>
        <name>(6S)-5-formyl-5,6,7,8-tetrahydrofolate</name>
        <dbReference type="ChEBI" id="CHEBI:57457"/>
    </ligand>
</feature>
<feature type="binding site" evidence="1">
    <location>
        <position position="87"/>
    </location>
    <ligand>
        <name>(6S)-5-formyl-5,6,7,8-tetrahydrofolate</name>
        <dbReference type="ChEBI" id="CHEBI:57457"/>
    </ligand>
</feature>
<feature type="binding site" evidence="1">
    <location>
        <position position="126"/>
    </location>
    <ligand>
        <name>(6S)-5-formyl-5,6,7,8-tetrahydrofolate</name>
        <dbReference type="ChEBI" id="CHEBI:57457"/>
    </ligand>
</feature>
<feature type="binding site" evidence="1">
    <location>
        <begin position="233"/>
        <end position="238"/>
    </location>
    <ligand>
        <name>GTP</name>
        <dbReference type="ChEBI" id="CHEBI:37565"/>
    </ligand>
</feature>
<feature type="binding site" evidence="1">
    <location>
        <position position="233"/>
    </location>
    <ligand>
        <name>K(+)</name>
        <dbReference type="ChEBI" id="CHEBI:29103"/>
    </ligand>
</feature>
<feature type="binding site" evidence="1">
    <location>
        <position position="237"/>
    </location>
    <ligand>
        <name>Mg(2+)</name>
        <dbReference type="ChEBI" id="CHEBI:18420"/>
    </ligand>
</feature>
<feature type="binding site" evidence="1">
    <location>
        <begin position="252"/>
        <end position="258"/>
    </location>
    <ligand>
        <name>GTP</name>
        <dbReference type="ChEBI" id="CHEBI:37565"/>
    </ligand>
</feature>
<feature type="binding site" evidence="1">
    <location>
        <position position="252"/>
    </location>
    <ligand>
        <name>K(+)</name>
        <dbReference type="ChEBI" id="CHEBI:29103"/>
    </ligand>
</feature>
<feature type="binding site" evidence="1">
    <location>
        <position position="254"/>
    </location>
    <ligand>
        <name>K(+)</name>
        <dbReference type="ChEBI" id="CHEBI:29103"/>
    </ligand>
</feature>
<feature type="binding site" evidence="1">
    <location>
        <position position="257"/>
    </location>
    <ligand>
        <name>K(+)</name>
        <dbReference type="ChEBI" id="CHEBI:29103"/>
    </ligand>
</feature>
<feature type="binding site" evidence="1">
    <location>
        <position position="258"/>
    </location>
    <ligand>
        <name>Mg(2+)</name>
        <dbReference type="ChEBI" id="CHEBI:18420"/>
    </ligand>
</feature>
<feature type="binding site" evidence="1">
    <location>
        <begin position="277"/>
        <end position="280"/>
    </location>
    <ligand>
        <name>GTP</name>
        <dbReference type="ChEBI" id="CHEBI:37565"/>
    </ligand>
</feature>
<feature type="binding site" evidence="1">
    <location>
        <position position="457"/>
    </location>
    <ligand>
        <name>(6S)-5-formyl-5,6,7,8-tetrahydrofolate</name>
        <dbReference type="ChEBI" id="CHEBI:57457"/>
    </ligand>
</feature>
<reference key="1">
    <citation type="journal article" date="2007" name="J. Bacteriol.">
        <title>Genome-wide transcriptional changes in Streptococcus gordonii in response to competence signaling peptide.</title>
        <authorList>
            <person name="Vickerman M.M."/>
            <person name="Iobst S."/>
            <person name="Jesionowski A.M."/>
            <person name="Gill S.R."/>
        </authorList>
    </citation>
    <scope>NUCLEOTIDE SEQUENCE [LARGE SCALE GENOMIC DNA]</scope>
    <source>
        <strain>Challis / ATCC 35105 / BCRC 15272 / CH1 / DL1 / V288</strain>
    </source>
</reference>
<accession>A8AXP0</accession>
<proteinExistence type="inferred from homology"/>
<name>MNME_STRGC</name>
<protein>
    <recommendedName>
        <fullName evidence="1">tRNA modification GTPase MnmE</fullName>
        <ecNumber evidence="1">3.6.-.-</ecNumber>
    </recommendedName>
</protein>
<evidence type="ECO:0000255" key="1">
    <source>
        <dbReference type="HAMAP-Rule" id="MF_00379"/>
    </source>
</evidence>
<organism>
    <name type="scientific">Streptococcus gordonii (strain Challis / ATCC 35105 / BCRC 15272 / CH1 / DL1 / V288)</name>
    <dbReference type="NCBI Taxonomy" id="467705"/>
    <lineage>
        <taxon>Bacteria</taxon>
        <taxon>Bacillati</taxon>
        <taxon>Bacillota</taxon>
        <taxon>Bacilli</taxon>
        <taxon>Lactobacillales</taxon>
        <taxon>Streptococcaceae</taxon>
        <taxon>Streptococcus</taxon>
    </lineage>
</organism>
<keyword id="KW-0963">Cytoplasm</keyword>
<keyword id="KW-0342">GTP-binding</keyword>
<keyword id="KW-0378">Hydrolase</keyword>
<keyword id="KW-0460">Magnesium</keyword>
<keyword id="KW-0479">Metal-binding</keyword>
<keyword id="KW-0547">Nucleotide-binding</keyword>
<keyword id="KW-0630">Potassium</keyword>
<keyword id="KW-1185">Reference proteome</keyword>
<keyword id="KW-0819">tRNA processing</keyword>
<comment type="function">
    <text evidence="1">Exhibits a very high intrinsic GTPase hydrolysis rate. Involved in the addition of a carboxymethylaminomethyl (cmnm) group at the wobble position (U34) of certain tRNAs, forming tRNA-cmnm(5)s(2)U34.</text>
</comment>
<comment type="cofactor">
    <cofactor evidence="1">
        <name>K(+)</name>
        <dbReference type="ChEBI" id="CHEBI:29103"/>
    </cofactor>
    <text evidence="1">Binds 1 potassium ion per subunit.</text>
</comment>
<comment type="subunit">
    <text evidence="1">Homodimer. Heterotetramer of two MnmE and two MnmG subunits.</text>
</comment>
<comment type="subcellular location">
    <subcellularLocation>
        <location evidence="1">Cytoplasm</location>
    </subcellularLocation>
</comment>
<comment type="similarity">
    <text evidence="1">Belongs to the TRAFAC class TrmE-Era-EngA-EngB-Septin-like GTPase superfamily. TrmE GTPase family.</text>
</comment>
<gene>
    <name evidence="1" type="primary">mnmE</name>
    <name evidence="1" type="synonym">trmE</name>
    <name type="ordered locus">SGO_1266</name>
</gene>
<dbReference type="EC" id="3.6.-.-" evidence="1"/>
<dbReference type="EMBL" id="CP000725">
    <property type="protein sequence ID" value="ABV09219.1"/>
    <property type="molecule type" value="Genomic_DNA"/>
</dbReference>
<dbReference type="RefSeq" id="WP_012000661.1">
    <property type="nucleotide sequence ID" value="NC_009785.1"/>
</dbReference>
<dbReference type="SMR" id="A8AXP0"/>
<dbReference type="STRING" id="467705.SGO_1266"/>
<dbReference type="KEGG" id="sgo:SGO_1266"/>
<dbReference type="eggNOG" id="COG0486">
    <property type="taxonomic scope" value="Bacteria"/>
</dbReference>
<dbReference type="HOGENOM" id="CLU_019624_4_1_9"/>
<dbReference type="Proteomes" id="UP000001131">
    <property type="component" value="Chromosome"/>
</dbReference>
<dbReference type="GO" id="GO:0005829">
    <property type="term" value="C:cytosol"/>
    <property type="evidence" value="ECO:0007669"/>
    <property type="project" value="TreeGrafter"/>
</dbReference>
<dbReference type="GO" id="GO:0005525">
    <property type="term" value="F:GTP binding"/>
    <property type="evidence" value="ECO:0007669"/>
    <property type="project" value="UniProtKB-UniRule"/>
</dbReference>
<dbReference type="GO" id="GO:0003924">
    <property type="term" value="F:GTPase activity"/>
    <property type="evidence" value="ECO:0007669"/>
    <property type="project" value="UniProtKB-UniRule"/>
</dbReference>
<dbReference type="GO" id="GO:0046872">
    <property type="term" value="F:metal ion binding"/>
    <property type="evidence" value="ECO:0007669"/>
    <property type="project" value="UniProtKB-KW"/>
</dbReference>
<dbReference type="GO" id="GO:0030488">
    <property type="term" value="P:tRNA methylation"/>
    <property type="evidence" value="ECO:0007669"/>
    <property type="project" value="TreeGrafter"/>
</dbReference>
<dbReference type="GO" id="GO:0002098">
    <property type="term" value="P:tRNA wobble uridine modification"/>
    <property type="evidence" value="ECO:0007669"/>
    <property type="project" value="TreeGrafter"/>
</dbReference>
<dbReference type="CDD" id="cd04164">
    <property type="entry name" value="trmE"/>
    <property type="match status" value="1"/>
</dbReference>
<dbReference type="CDD" id="cd14858">
    <property type="entry name" value="TrmE_N"/>
    <property type="match status" value="1"/>
</dbReference>
<dbReference type="FunFam" id="3.30.1360.120:FF:000003">
    <property type="entry name" value="tRNA modification GTPase MnmE"/>
    <property type="match status" value="1"/>
</dbReference>
<dbReference type="FunFam" id="3.40.50.300:FF:000494">
    <property type="entry name" value="tRNA modification GTPase MnmE"/>
    <property type="match status" value="1"/>
</dbReference>
<dbReference type="Gene3D" id="3.40.50.300">
    <property type="entry name" value="P-loop containing nucleotide triphosphate hydrolases"/>
    <property type="match status" value="1"/>
</dbReference>
<dbReference type="Gene3D" id="3.30.1360.120">
    <property type="entry name" value="Probable tRNA modification gtpase trme, domain 1"/>
    <property type="match status" value="1"/>
</dbReference>
<dbReference type="Gene3D" id="1.20.120.430">
    <property type="entry name" value="tRNA modification GTPase MnmE domain 2"/>
    <property type="match status" value="1"/>
</dbReference>
<dbReference type="HAMAP" id="MF_00379">
    <property type="entry name" value="GTPase_MnmE"/>
    <property type="match status" value="1"/>
</dbReference>
<dbReference type="InterPro" id="IPR031168">
    <property type="entry name" value="G_TrmE"/>
</dbReference>
<dbReference type="InterPro" id="IPR006073">
    <property type="entry name" value="GTP-bd"/>
</dbReference>
<dbReference type="InterPro" id="IPR018948">
    <property type="entry name" value="GTP-bd_TrmE_N"/>
</dbReference>
<dbReference type="InterPro" id="IPR004520">
    <property type="entry name" value="GTPase_MnmE"/>
</dbReference>
<dbReference type="InterPro" id="IPR027368">
    <property type="entry name" value="MnmE_dom2"/>
</dbReference>
<dbReference type="InterPro" id="IPR025867">
    <property type="entry name" value="MnmE_helical"/>
</dbReference>
<dbReference type="InterPro" id="IPR027417">
    <property type="entry name" value="P-loop_NTPase"/>
</dbReference>
<dbReference type="InterPro" id="IPR005225">
    <property type="entry name" value="Small_GTP-bd"/>
</dbReference>
<dbReference type="InterPro" id="IPR027266">
    <property type="entry name" value="TrmE/GcvT_dom1"/>
</dbReference>
<dbReference type="NCBIfam" id="TIGR00450">
    <property type="entry name" value="mnmE_trmE_thdF"/>
    <property type="match status" value="1"/>
</dbReference>
<dbReference type="NCBIfam" id="NF003661">
    <property type="entry name" value="PRK05291.1-3"/>
    <property type="match status" value="1"/>
</dbReference>
<dbReference type="NCBIfam" id="TIGR00231">
    <property type="entry name" value="small_GTP"/>
    <property type="match status" value="1"/>
</dbReference>
<dbReference type="PANTHER" id="PTHR42714">
    <property type="entry name" value="TRNA MODIFICATION GTPASE GTPBP3"/>
    <property type="match status" value="1"/>
</dbReference>
<dbReference type="PANTHER" id="PTHR42714:SF2">
    <property type="entry name" value="TRNA MODIFICATION GTPASE GTPBP3, MITOCHONDRIAL"/>
    <property type="match status" value="1"/>
</dbReference>
<dbReference type="Pfam" id="PF01926">
    <property type="entry name" value="MMR_HSR1"/>
    <property type="match status" value="1"/>
</dbReference>
<dbReference type="Pfam" id="PF12631">
    <property type="entry name" value="MnmE_helical"/>
    <property type="match status" value="1"/>
</dbReference>
<dbReference type="Pfam" id="PF10396">
    <property type="entry name" value="TrmE_N"/>
    <property type="match status" value="1"/>
</dbReference>
<dbReference type="SUPFAM" id="SSF52540">
    <property type="entry name" value="P-loop containing nucleoside triphosphate hydrolases"/>
    <property type="match status" value="1"/>
</dbReference>
<dbReference type="SUPFAM" id="SSF116878">
    <property type="entry name" value="TrmE connector domain"/>
    <property type="match status" value="1"/>
</dbReference>
<dbReference type="PROSITE" id="PS51709">
    <property type="entry name" value="G_TRME"/>
    <property type="match status" value="1"/>
</dbReference>